<name>MDTD_YERPG</name>
<gene>
    <name evidence="1" type="primary">mdtD</name>
    <name type="ordered locus">YpAngola_A3100</name>
</gene>
<dbReference type="EMBL" id="CP000901">
    <property type="protein sequence ID" value="ABX88257.1"/>
    <property type="molecule type" value="Genomic_DNA"/>
</dbReference>
<dbReference type="RefSeq" id="WP_002209795.1">
    <property type="nucleotide sequence ID" value="NZ_CP009935.1"/>
</dbReference>
<dbReference type="SMR" id="A9QZU7"/>
<dbReference type="KEGG" id="ypg:YpAngola_A3100"/>
<dbReference type="PATRIC" id="fig|349746.12.peg.4158"/>
<dbReference type="GO" id="GO:0005886">
    <property type="term" value="C:plasma membrane"/>
    <property type="evidence" value="ECO:0007669"/>
    <property type="project" value="UniProtKB-SubCell"/>
</dbReference>
<dbReference type="GO" id="GO:0022857">
    <property type="term" value="F:transmembrane transporter activity"/>
    <property type="evidence" value="ECO:0007669"/>
    <property type="project" value="UniProtKB-UniRule"/>
</dbReference>
<dbReference type="CDD" id="cd17503">
    <property type="entry name" value="MFS_LmrB_MDR_like"/>
    <property type="match status" value="1"/>
</dbReference>
<dbReference type="FunFam" id="1.20.1250.20:FF:000021">
    <property type="entry name" value="Putative multidrug resistance protein MdtD"/>
    <property type="match status" value="1"/>
</dbReference>
<dbReference type="FunFam" id="1.20.1720.10:FF:000001">
    <property type="entry name" value="Putative multidrug resistance protein MdtD"/>
    <property type="match status" value="1"/>
</dbReference>
<dbReference type="Gene3D" id="1.20.1250.20">
    <property type="entry name" value="MFS general substrate transporter like domains"/>
    <property type="match status" value="1"/>
</dbReference>
<dbReference type="Gene3D" id="1.20.1720.10">
    <property type="entry name" value="Multidrug resistance protein D"/>
    <property type="match status" value="1"/>
</dbReference>
<dbReference type="HAMAP" id="MF_01577">
    <property type="entry name" value="MFS_MdtD"/>
    <property type="match status" value="1"/>
</dbReference>
<dbReference type="InterPro" id="IPR004638">
    <property type="entry name" value="EmrB-like"/>
</dbReference>
<dbReference type="InterPro" id="IPR011701">
    <property type="entry name" value="MFS"/>
</dbReference>
<dbReference type="InterPro" id="IPR020846">
    <property type="entry name" value="MFS_dom"/>
</dbReference>
<dbReference type="InterPro" id="IPR036259">
    <property type="entry name" value="MFS_trans_sf"/>
</dbReference>
<dbReference type="InterPro" id="IPR023721">
    <property type="entry name" value="Multi-R_MdtD"/>
</dbReference>
<dbReference type="NCBIfam" id="TIGR00711">
    <property type="entry name" value="efflux_EmrB"/>
    <property type="match status" value="1"/>
</dbReference>
<dbReference type="NCBIfam" id="NF007799">
    <property type="entry name" value="PRK10504.1"/>
    <property type="match status" value="1"/>
</dbReference>
<dbReference type="PANTHER" id="PTHR42718:SF46">
    <property type="entry name" value="BLR6921 PROTEIN"/>
    <property type="match status" value="1"/>
</dbReference>
<dbReference type="PANTHER" id="PTHR42718">
    <property type="entry name" value="MAJOR FACILITATOR SUPERFAMILY MULTIDRUG TRANSPORTER MFSC"/>
    <property type="match status" value="1"/>
</dbReference>
<dbReference type="Pfam" id="PF07690">
    <property type="entry name" value="MFS_1"/>
    <property type="match status" value="1"/>
</dbReference>
<dbReference type="PRINTS" id="PR01036">
    <property type="entry name" value="TCRTETB"/>
</dbReference>
<dbReference type="SUPFAM" id="SSF103473">
    <property type="entry name" value="MFS general substrate transporter"/>
    <property type="match status" value="1"/>
</dbReference>
<dbReference type="PROSITE" id="PS50850">
    <property type="entry name" value="MFS"/>
    <property type="match status" value="1"/>
</dbReference>
<protein>
    <recommendedName>
        <fullName evidence="1">Putative multidrug resistance protein MdtD</fullName>
    </recommendedName>
</protein>
<accession>A9QZU7</accession>
<reference key="1">
    <citation type="journal article" date="2010" name="J. Bacteriol.">
        <title>Genome sequence of the deep-rooted Yersinia pestis strain Angola reveals new insights into the evolution and pangenome of the plague bacterium.</title>
        <authorList>
            <person name="Eppinger M."/>
            <person name="Worsham P.L."/>
            <person name="Nikolich M.P."/>
            <person name="Riley D.R."/>
            <person name="Sebastian Y."/>
            <person name="Mou S."/>
            <person name="Achtman M."/>
            <person name="Lindler L.E."/>
            <person name="Ravel J."/>
        </authorList>
    </citation>
    <scope>NUCLEOTIDE SEQUENCE [LARGE SCALE GENOMIC DNA]</scope>
    <source>
        <strain>Angola</strain>
    </source>
</reference>
<feature type="chain" id="PRO_0000365293" description="Putative multidrug resistance protein MdtD">
    <location>
        <begin position="1"/>
        <end position="465"/>
    </location>
</feature>
<feature type="transmembrane region" description="Helical" evidence="1">
    <location>
        <begin position="12"/>
        <end position="32"/>
    </location>
</feature>
<feature type="transmembrane region" description="Helical" evidence="1">
    <location>
        <begin position="49"/>
        <end position="69"/>
    </location>
</feature>
<feature type="transmembrane region" description="Helical" evidence="1">
    <location>
        <begin position="72"/>
        <end position="92"/>
    </location>
</feature>
<feature type="transmembrane region" description="Helical" evidence="1">
    <location>
        <begin position="102"/>
        <end position="124"/>
    </location>
</feature>
<feature type="transmembrane region" description="Helical" evidence="1">
    <location>
        <begin position="138"/>
        <end position="158"/>
    </location>
</feature>
<feature type="transmembrane region" description="Helical" evidence="1">
    <location>
        <begin position="165"/>
        <end position="185"/>
    </location>
</feature>
<feature type="transmembrane region" description="Helical" evidence="1">
    <location>
        <begin position="195"/>
        <end position="215"/>
    </location>
</feature>
<feature type="transmembrane region" description="Helical" evidence="1">
    <location>
        <begin position="219"/>
        <end position="239"/>
    </location>
</feature>
<feature type="transmembrane region" description="Helical" evidence="1">
    <location>
        <begin position="267"/>
        <end position="287"/>
    </location>
</feature>
<feature type="transmembrane region" description="Helical" evidence="1">
    <location>
        <begin position="290"/>
        <end position="310"/>
    </location>
</feature>
<feature type="transmembrane region" description="Helical" evidence="1">
    <location>
        <begin position="342"/>
        <end position="362"/>
    </location>
</feature>
<feature type="transmembrane region" description="Helical" evidence="1">
    <location>
        <begin position="393"/>
        <end position="413"/>
    </location>
</feature>
<feature type="transmembrane region" description="Helical" evidence="1">
    <location>
        <begin position="430"/>
        <end position="450"/>
    </location>
</feature>
<keyword id="KW-0997">Cell inner membrane</keyword>
<keyword id="KW-1003">Cell membrane</keyword>
<keyword id="KW-0472">Membrane</keyword>
<keyword id="KW-0812">Transmembrane</keyword>
<keyword id="KW-1133">Transmembrane helix</keyword>
<keyword id="KW-0813">Transport</keyword>
<evidence type="ECO:0000255" key="1">
    <source>
        <dbReference type="HAMAP-Rule" id="MF_01577"/>
    </source>
</evidence>
<proteinExistence type="inferred from homology"/>
<organism>
    <name type="scientific">Yersinia pestis bv. Antiqua (strain Angola)</name>
    <dbReference type="NCBI Taxonomy" id="349746"/>
    <lineage>
        <taxon>Bacteria</taxon>
        <taxon>Pseudomonadati</taxon>
        <taxon>Pseudomonadota</taxon>
        <taxon>Gammaproteobacteria</taxon>
        <taxon>Enterobacterales</taxon>
        <taxon>Yersiniaceae</taxon>
        <taxon>Yersinia</taxon>
    </lineage>
</organism>
<sequence>MVTQATSVRWQLWIVAFGFFMQTLDTTIVNTALPSIAASLGENPLRMQSVIVSYVLTVAVMLPASGWLADRIGVKWVFFSAIILFTFGSLMCAQSATLNELILSRVLQGVGGAMMVPVGRLTVMKIVPREQYMAAMAFVTLPGQIGPLVGPALGGFLVEFASWHWIFLINLPVGVIGALATLLLMPNHKMSTRRFDISGFIMLAIGMATLTLALDGHTGLGLSPLAIAGLILCGVIALGSYWWHALGNRFALFSLHLFKNKIYTLGLVGSMSARIGSGMLPFMTPIFLQIGLGFSPFHAGLMMIPMIIGSMGMKRIIVQVVNRFGYRRVLVNATLLLAVVSLSLPLVAIMGWTLLMPVVLFFQGMLNALRFSTMNTLTLKTLPDRLASSGNSLLSMAMQLSMSIGVSTAGILLGTFAHHQVATNTPATHSAFLYSYLCMAIIIALPALIFNRVPPDTGANRHLAR</sequence>
<comment type="subcellular location">
    <subcellularLocation>
        <location evidence="1">Cell inner membrane</location>
        <topology evidence="1">Multi-pass membrane protein</topology>
    </subcellularLocation>
</comment>
<comment type="similarity">
    <text evidence="1">Belongs to the major facilitator superfamily. TCR/Tet family.</text>
</comment>